<sequence length="571" mass="63612">MKDSRGKRRCLAFLKGLRLKTDPNLPGAKQKTPFNISRFWLLVIIVIYTATSACIYFDWSAIRNLLLTVGKYKHLNVGDYPDITLSPQYKRINSLYPITLAIHFTMSVFCGFLYDHIGPKFTAIIGQMCNIMSWVFLSIDSTTVDTTFLSFVFLGLGADTAFIPILTISNLYPDASTFILTVVGAAASLSYAVPATLNFICRRYPSTPFPYICYGYIFLILVPCLLVATFLLPLMPFKGLDYYIERDQSRRSGAEGDAHRGRRGDPKMVTSQTNDEVDVEMQPFENAQSEASKGRSGNGSNTPSTRGNTPNGGKQTRGKTTSESNRSSKGEGSAIQGVEEEDQATNSSKGVNEEDSDFHRKSISLFFKVLLSYPSICIIVYFILFNISTVFYGMVTDTYFSYDRSIINIINILMPISCIPCIIFGRFINRYGSAIIIILMNAFSALMHLTALIKHRAAGLVSAFLYMCVTSIYTSQIYCFIQNSFPSVVFGKLLGFASLCGGLFSLLCEKLYDQIVSKDGASIDPTNVVLLLVIAFILMFLPLTVLYFRKYERSIEDLHQEVAMSQSSGRA</sequence>
<gene>
    <name evidence="4" type="primary">NPT1</name>
    <name evidence="5" type="synonym">ApiAT8</name>
    <name evidence="6" type="ORF">PVX_081515</name>
</gene>
<organism evidence="7">
    <name type="scientific">Plasmodium vivax (strain Salvador I)</name>
    <dbReference type="NCBI Taxonomy" id="126793"/>
    <lineage>
        <taxon>Eukaryota</taxon>
        <taxon>Sar</taxon>
        <taxon>Alveolata</taxon>
        <taxon>Apicomplexa</taxon>
        <taxon>Aconoidasida</taxon>
        <taxon>Haemosporida</taxon>
        <taxon>Plasmodiidae</taxon>
        <taxon>Plasmodium</taxon>
        <taxon>Plasmodium (Plasmodium)</taxon>
    </lineage>
</organism>
<evidence type="ECO:0000255" key="1"/>
<evidence type="ECO:0000255" key="2">
    <source>
        <dbReference type="PROSITE-ProRule" id="PRU00498"/>
    </source>
</evidence>
<evidence type="ECO:0000269" key="3">
    <source>
    </source>
</evidence>
<evidence type="ECO:0000303" key="4">
    <source>
    </source>
</evidence>
<evidence type="ECO:0000305" key="5"/>
<evidence type="ECO:0000312" key="6">
    <source>
        <dbReference type="EMBL" id="EDL43851.1"/>
    </source>
</evidence>
<evidence type="ECO:0000312" key="7">
    <source>
        <dbReference type="Proteomes" id="UP000008333"/>
    </source>
</evidence>
<reference evidence="7" key="1">
    <citation type="journal article" date="2008" name="Nature">
        <title>Comparative genomics of the neglected human malaria parasite Plasmodium vivax.</title>
        <authorList>
            <person name="Carlton J.M."/>
            <person name="Adams J.H."/>
            <person name="Silva J.C."/>
            <person name="Bidwell S.L."/>
            <person name="Lorenzi H."/>
            <person name="Caler E."/>
            <person name="Crabtree J."/>
            <person name="Angiuoli S.V."/>
            <person name="Merino E.F."/>
            <person name="Amedeo P."/>
            <person name="Cheng Q."/>
            <person name="Coulson R.M.R."/>
            <person name="Crabb B.S."/>
            <person name="del Portillo H.A."/>
            <person name="Essien K."/>
            <person name="Feldblyum T.V."/>
            <person name="Fernandez-Becerra C."/>
            <person name="Gilson P.R."/>
            <person name="Gueye A.H."/>
            <person name="Guo X."/>
            <person name="Kang'a S."/>
            <person name="Kooij T.W.A."/>
            <person name="Korsinczky M."/>
            <person name="Meyer E.V.-S."/>
            <person name="Nene V."/>
            <person name="Paulsen I."/>
            <person name="White O."/>
            <person name="Ralph S.A."/>
            <person name="Ren Q."/>
            <person name="Sargeant T.J."/>
            <person name="Salzberg S.L."/>
            <person name="Stoeckert C.J."/>
            <person name="Sullivan S.A."/>
            <person name="Yamamoto M.M."/>
            <person name="Hoffman S.L."/>
            <person name="Wortman J.R."/>
            <person name="Gardner M.J."/>
            <person name="Galinski M.R."/>
            <person name="Barnwell J.W."/>
            <person name="Fraser-Liggett C.M."/>
        </authorList>
    </citation>
    <scope>NUCLEOTIDE SEQUENCE [LARGE SCALE GENOMIC DNA]</scope>
    <source>
        <strain evidence="7">Salvador I</strain>
    </source>
</reference>
<reference evidence="5" key="2">
    <citation type="journal article" date="2025" name="Sci. Rep.">
        <title>Characteristics of Plasmodium vivax apicomplexan amino acid transporter 8 (PvApiAT8) in the cationic amino acid transport.</title>
        <authorList>
            <person name="Lee W.J."/>
            <person name="Mazigo E."/>
            <person name="Han J.H."/>
            <person name="Cha S.H."/>
        </authorList>
    </citation>
    <scope>FUNCTION</scope>
    <scope>TRANSPORTER ACTIVITY</scope>
    <scope>BIOPHYSICOCHEMICAL PROPERTIES</scope>
</reference>
<proteinExistence type="evidence at protein level"/>
<accession>A5K9W3</accession>
<feature type="chain" id="PRO_0000462369" description="Cationic amino acid transporter 8">
    <location>
        <begin position="1"/>
        <end position="571"/>
    </location>
</feature>
<feature type="transmembrane region" description="Helical" evidence="1">
    <location>
        <begin position="39"/>
        <end position="59"/>
    </location>
</feature>
<feature type="transmembrane region" description="Helical" evidence="1">
    <location>
        <begin position="94"/>
        <end position="114"/>
    </location>
</feature>
<feature type="transmembrane region" description="Helical" evidence="1">
    <location>
        <begin position="117"/>
        <end position="137"/>
    </location>
</feature>
<feature type="transmembrane region" description="Helical" evidence="1">
    <location>
        <begin position="148"/>
        <end position="168"/>
    </location>
</feature>
<feature type="transmembrane region" description="Helical" evidence="1">
    <location>
        <begin position="177"/>
        <end position="197"/>
    </location>
</feature>
<feature type="transmembrane region" description="Helical" evidence="1">
    <location>
        <begin position="217"/>
        <end position="237"/>
    </location>
</feature>
<feature type="transmembrane region" description="Helical" evidence="1">
    <location>
        <begin position="365"/>
        <end position="385"/>
    </location>
</feature>
<feature type="transmembrane region" description="Helical" evidence="1">
    <location>
        <begin position="405"/>
        <end position="425"/>
    </location>
</feature>
<feature type="transmembrane region" description="Helical" evidence="1">
    <location>
        <begin position="433"/>
        <end position="453"/>
    </location>
</feature>
<feature type="transmembrane region" description="Helical" evidence="1">
    <location>
        <begin position="461"/>
        <end position="481"/>
    </location>
</feature>
<feature type="transmembrane region" description="Helical" evidence="1">
    <location>
        <begin position="488"/>
        <end position="508"/>
    </location>
</feature>
<feature type="transmembrane region" description="Helical" evidence="1">
    <location>
        <begin position="528"/>
        <end position="548"/>
    </location>
</feature>
<feature type="glycosylation site" description="N-linked (GlcNAc...) asparagine" evidence="2">
    <location>
        <position position="35"/>
    </location>
</feature>
<feature type="glycosylation site" description="N-linked (GlcNAc...) asparagine" evidence="2">
    <location>
        <position position="298"/>
    </location>
</feature>
<feature type="glycosylation site" description="N-linked (GlcNAc...) asparagine" evidence="2">
    <location>
        <position position="325"/>
    </location>
</feature>
<feature type="glycosylation site" description="N-linked (GlcNAc...) asparagine" evidence="2">
    <location>
        <position position="346"/>
    </location>
</feature>
<feature type="glycosylation site" description="N-linked (GlcNAc...) asparagine" evidence="2">
    <location>
        <position position="386"/>
    </location>
</feature>
<name>AT8_PLAVS</name>
<protein>
    <recommendedName>
        <fullName evidence="5">Cationic amino acid transporter 8</fullName>
    </recommendedName>
    <alternativeName>
        <fullName evidence="4">Apicomplexan amino acid transporter 8</fullName>
        <shortName evidence="4">PvApiAT8</shortName>
    </alternativeName>
    <alternativeName>
        <fullName evidence="4">Novel putative transporter 1</fullName>
    </alternativeName>
</protein>
<dbReference type="EMBL" id="AAKM01000013">
    <property type="protein sequence ID" value="EDL43851.1"/>
    <property type="molecule type" value="Genomic_DNA"/>
</dbReference>
<dbReference type="RefSeq" id="XP_001613578.1">
    <property type="nucleotide sequence ID" value="XM_001613528.1"/>
</dbReference>
<dbReference type="STRING" id="126793.A5K9W3"/>
<dbReference type="EnsemblProtists" id="EDL43851">
    <property type="protein sequence ID" value="EDL43851"/>
    <property type="gene ID" value="PVX_081515"/>
</dbReference>
<dbReference type="GeneID" id="5472848"/>
<dbReference type="KEGG" id="pvx:PVX_081515"/>
<dbReference type="VEuPathDB" id="PlasmoDB:PVX_081515"/>
<dbReference type="InParanoid" id="A5K9W3"/>
<dbReference type="OMA" id="QAPRRMF"/>
<dbReference type="PhylomeDB" id="A5K9W3"/>
<dbReference type="Proteomes" id="UP000008333">
    <property type="component" value="Chromosome 2"/>
</dbReference>
<dbReference type="GO" id="GO:0016020">
    <property type="term" value="C:membrane"/>
    <property type="evidence" value="ECO:0007669"/>
    <property type="project" value="UniProtKB-KW"/>
</dbReference>
<dbReference type="Gene3D" id="1.20.1250.20">
    <property type="entry name" value="MFS general substrate transporter like domains"/>
    <property type="match status" value="1"/>
</dbReference>
<dbReference type="InterPro" id="IPR036259">
    <property type="entry name" value="MFS_trans_sf"/>
</dbReference>
<dbReference type="InterPro" id="IPR052599">
    <property type="entry name" value="SLC43A_AATransporter"/>
</dbReference>
<dbReference type="PANTHER" id="PTHR20772">
    <property type="entry name" value="PROTEIN FMP42"/>
    <property type="match status" value="1"/>
</dbReference>
<dbReference type="PANTHER" id="PTHR20772:SF2">
    <property type="entry name" value="PROTEIN FMP42"/>
    <property type="match status" value="1"/>
</dbReference>
<dbReference type="SUPFAM" id="SSF103473">
    <property type="entry name" value="MFS general substrate transporter"/>
    <property type="match status" value="1"/>
</dbReference>
<keyword id="KW-0029">Amino-acid transport</keyword>
<keyword id="KW-0325">Glycoprotein</keyword>
<keyword id="KW-0472">Membrane</keyword>
<keyword id="KW-1185">Reference proteome</keyword>
<keyword id="KW-0812">Transmembrane</keyword>
<keyword id="KW-1133">Transmembrane helix</keyword>
<keyword id="KW-0813">Transport</keyword>
<comment type="function">
    <text evidence="3">Sodium-independent cationic amino acid transporter (PubMed:39905186). Transports L-arginine, L-lysine, L-histidine and L-ornithine (PubMed:39905186).</text>
</comment>
<comment type="catalytic activity">
    <reaction evidence="3">
        <text>L-arginine(in) = L-arginine(out)</text>
        <dbReference type="Rhea" id="RHEA:32143"/>
        <dbReference type="ChEBI" id="CHEBI:32682"/>
    </reaction>
</comment>
<comment type="biophysicochemical properties">
    <kinetics>
        <KM evidence="3">1.5 uM for L-arginine</KM>
    </kinetics>
    <phDependence>
        <text>Active at pH 6.5-8.5.</text>
    </phDependence>
</comment>
<comment type="subcellular location">
    <subcellularLocation>
        <location evidence="1">Membrane</location>
        <topology evidence="1">Multi-pass membrane protein</topology>
    </subcellularLocation>
</comment>
<comment type="similarity">
    <text evidence="5">Belongs to the SLC43A transporter (TC 2.A.1.44) family.</text>
</comment>